<reference evidence="6" key="1">
    <citation type="journal article" date="2012" name="Biol. Chem.">
        <title>Development of a host blood meal database: de novo sequencing of hemoglobin from nine small mammals using mass spectrometry.</title>
        <authorList>
            <person name="Laskay U.A."/>
            <person name="Burg J."/>
            <person name="Kaleta E.J."/>
            <person name="Vilcins I.M."/>
            <person name="Telford Iii S.R."/>
            <person name="Barbour A.G."/>
            <person name="Wysocki V.H."/>
        </authorList>
    </citation>
    <scope>PROTEIN SEQUENCE</scope>
    <source>
        <tissue evidence="4">Erythrocyte</tissue>
    </source>
</reference>
<organism>
    <name type="scientific">Microtus pennsylvanicus</name>
    <name type="common">Meadow vole</name>
    <dbReference type="NCBI Taxonomy" id="10058"/>
    <lineage>
        <taxon>Eukaryota</taxon>
        <taxon>Metazoa</taxon>
        <taxon>Chordata</taxon>
        <taxon>Craniata</taxon>
        <taxon>Vertebrata</taxon>
        <taxon>Euteleostomi</taxon>
        <taxon>Mammalia</taxon>
        <taxon>Eutheria</taxon>
        <taxon>Euarchontoglires</taxon>
        <taxon>Glires</taxon>
        <taxon>Rodentia</taxon>
        <taxon>Myomorpha</taxon>
        <taxon>Muroidea</taxon>
        <taxon>Cricetidae</taxon>
        <taxon>Arvicolinae</taxon>
        <taxon>Microtus</taxon>
    </lineage>
</organism>
<proteinExistence type="evidence at protein level"/>
<feature type="chain" id="PRO_0000415585" description="Hemoglobin subunit alpha">
    <location>
        <begin position="1"/>
        <end position="141"/>
    </location>
</feature>
<feature type="domain" description="Globin" evidence="3">
    <location>
        <begin position="1"/>
        <end position="141"/>
    </location>
</feature>
<feature type="binding site" evidence="3">
    <location>
        <position position="58"/>
    </location>
    <ligand>
        <name>O2</name>
        <dbReference type="ChEBI" id="CHEBI:15379"/>
    </ligand>
</feature>
<feature type="binding site" description="proximal binding residue" evidence="3">
    <location>
        <position position="87"/>
    </location>
    <ligand>
        <name>heme b</name>
        <dbReference type="ChEBI" id="CHEBI:60344"/>
    </ligand>
    <ligandPart>
        <name>Fe</name>
        <dbReference type="ChEBI" id="CHEBI:18248"/>
    </ligandPart>
</feature>
<feature type="modified residue" description="Phosphoserine" evidence="2">
    <location>
        <position position="3"/>
    </location>
</feature>
<feature type="modified residue" description="N6-succinyllysine" evidence="1">
    <location>
        <position position="7"/>
    </location>
</feature>
<feature type="modified residue" description="N6-succinyllysine" evidence="1">
    <location>
        <position position="11"/>
    </location>
</feature>
<feature type="modified residue" description="N6-acetyllysine; alternate" evidence="2">
    <location>
        <position position="16"/>
    </location>
</feature>
<feature type="modified residue" description="N6-succinyllysine; alternate" evidence="1">
    <location>
        <position position="16"/>
    </location>
</feature>
<feature type="modified residue" description="Phosphotyrosine" evidence="2">
    <location>
        <position position="24"/>
    </location>
</feature>
<feature type="modified residue" description="N6-succinyllysine" evidence="1">
    <location>
        <position position="40"/>
    </location>
</feature>
<feature type="modified residue" description="Phosphoserine" evidence="2">
    <location>
        <position position="49"/>
    </location>
</feature>
<feature type="modified residue" description="Phosphoserine" evidence="1">
    <location>
        <position position="102"/>
    </location>
</feature>
<feature type="modified residue" description="Phosphothreonine" evidence="1">
    <location>
        <position position="108"/>
    </location>
</feature>
<feature type="modified residue" description="Phosphoserine" evidence="1">
    <location>
        <position position="124"/>
    </location>
</feature>
<feature type="modified residue" description="Phosphoserine" evidence="1">
    <location>
        <position position="131"/>
    </location>
</feature>
<feature type="modified residue" description="Phosphothreonine" evidence="1">
    <location>
        <position position="134"/>
    </location>
</feature>
<feature type="modified residue" description="Phosphothreonine" evidence="1">
    <location>
        <position position="137"/>
    </location>
</feature>
<feature type="modified residue" description="Phosphoserine" evidence="1">
    <location>
        <position position="138"/>
    </location>
</feature>
<feature type="unsure residue" description="L or I" evidence="4">
    <location>
        <position position="2"/>
    </location>
</feature>
<feature type="unsure residue" description="L or I" evidence="4">
    <location>
        <position position="10"/>
    </location>
</feature>
<feature type="unsure residue" description="L or I" evidence="4">
    <location>
        <position position="17"/>
    </location>
</feature>
<feature type="unsure residue" description="L or I" evidence="4">
    <location>
        <position position="29"/>
    </location>
</feature>
<feature type="unsure residue" description="L or I" evidence="4">
    <location>
        <position position="66"/>
    </location>
</feature>
<feature type="unsure residue" description="L or I" evidence="4">
    <location>
        <position position="73"/>
    </location>
</feature>
<feature type="unsure residue" description="L or I" evidence="4">
    <location>
        <position position="76"/>
    </location>
</feature>
<feature type="unsure residue" description="L or I" evidence="4">
    <location>
        <position position="80"/>
    </location>
</feature>
<feature type="unsure residue" description="L or I" evidence="4">
    <location>
        <position position="83"/>
    </location>
</feature>
<feature type="unsure residue" description="L or I" evidence="4">
    <location>
        <position position="86"/>
    </location>
</feature>
<feature type="unsure residue" description="L or I" evidence="4">
    <location>
        <position position="91"/>
    </location>
</feature>
<feature type="unsure residue" description="L or I" evidence="4">
    <location>
        <position position="100"/>
    </location>
</feature>
<feature type="unsure residue" description="L or I" evidence="4">
    <location>
        <position position="101"/>
    </location>
</feature>
<feature type="unsure residue" description="L or I" evidence="4">
    <location>
        <position position="105"/>
    </location>
</feature>
<feature type="unsure residue" description="L or I" evidence="4">
    <location>
        <position position="106"/>
    </location>
</feature>
<feature type="unsure residue" description="L or I" evidence="4">
    <location>
        <position position="109"/>
    </location>
</feature>
<feature type="unsure residue" description="L or I" evidence="4">
    <location>
        <position position="113"/>
    </location>
</feature>
<feature type="unsure residue" description="L or I" evidence="4">
    <location>
        <position position="125"/>
    </location>
</feature>
<feature type="unsure residue" description="L or I" evidence="4">
    <location>
        <position position="129"/>
    </location>
</feature>
<feature type="unsure residue" description="L or I" evidence="4">
    <location>
        <position position="136"/>
    </location>
</feature>
<accession>B3EWE3</accession>
<sequence>VLSGDDKSNLKTAWGKLGGHAGEYGAEALERMFVAYPTTKTYFPHFDVSHGSAQVKGHGKKVADALTTAVGHLDDLPGALSALSDLHAHKLRVDPVNFKLLSHCLLVTLANHLPADFTPAVHASLDKFLASVSTVLTSKYR</sequence>
<comment type="function">
    <text evidence="6">Involved in oxygen transport from the lung to the various peripheral tissues.</text>
</comment>
<comment type="subunit">
    <text evidence="6">Heterotetramer of two alpha chains and two beta chains.</text>
</comment>
<comment type="tissue specificity">
    <text evidence="6">Red blood cells.</text>
</comment>
<comment type="similarity">
    <text evidence="3">Belongs to the globin family.</text>
</comment>
<evidence type="ECO:0000250" key="1">
    <source>
        <dbReference type="UniProtKB" id="P01942"/>
    </source>
</evidence>
<evidence type="ECO:0000250" key="2">
    <source>
        <dbReference type="UniProtKB" id="P69905"/>
    </source>
</evidence>
<evidence type="ECO:0000255" key="3">
    <source>
        <dbReference type="PROSITE-ProRule" id="PRU00238"/>
    </source>
</evidence>
<evidence type="ECO:0000269" key="4">
    <source>
    </source>
</evidence>
<evidence type="ECO:0000303" key="5">
    <source>
    </source>
</evidence>
<evidence type="ECO:0000305" key="6"/>
<keyword id="KW-0007">Acetylation</keyword>
<keyword id="KW-0903">Direct protein sequencing</keyword>
<keyword id="KW-0349">Heme</keyword>
<keyword id="KW-0408">Iron</keyword>
<keyword id="KW-0479">Metal-binding</keyword>
<keyword id="KW-0561">Oxygen transport</keyword>
<keyword id="KW-0597">Phosphoprotein</keyword>
<keyword id="KW-0813">Transport</keyword>
<protein>
    <recommendedName>
        <fullName evidence="5">Hemoglobin subunit alpha</fullName>
    </recommendedName>
</protein>
<dbReference type="SMR" id="B3EWE3"/>
<dbReference type="GO" id="GO:0072562">
    <property type="term" value="C:blood microparticle"/>
    <property type="evidence" value="ECO:0007669"/>
    <property type="project" value="TreeGrafter"/>
</dbReference>
<dbReference type="GO" id="GO:0031838">
    <property type="term" value="C:haptoglobin-hemoglobin complex"/>
    <property type="evidence" value="ECO:0007669"/>
    <property type="project" value="TreeGrafter"/>
</dbReference>
<dbReference type="GO" id="GO:0005833">
    <property type="term" value="C:hemoglobin complex"/>
    <property type="evidence" value="ECO:0007669"/>
    <property type="project" value="InterPro"/>
</dbReference>
<dbReference type="GO" id="GO:0031720">
    <property type="term" value="F:haptoglobin binding"/>
    <property type="evidence" value="ECO:0007669"/>
    <property type="project" value="TreeGrafter"/>
</dbReference>
<dbReference type="GO" id="GO:0020037">
    <property type="term" value="F:heme binding"/>
    <property type="evidence" value="ECO:0007669"/>
    <property type="project" value="InterPro"/>
</dbReference>
<dbReference type="GO" id="GO:0005506">
    <property type="term" value="F:iron ion binding"/>
    <property type="evidence" value="ECO:0007669"/>
    <property type="project" value="InterPro"/>
</dbReference>
<dbReference type="GO" id="GO:0043177">
    <property type="term" value="F:organic acid binding"/>
    <property type="evidence" value="ECO:0007669"/>
    <property type="project" value="TreeGrafter"/>
</dbReference>
<dbReference type="GO" id="GO:0019825">
    <property type="term" value="F:oxygen binding"/>
    <property type="evidence" value="ECO:0007669"/>
    <property type="project" value="InterPro"/>
</dbReference>
<dbReference type="GO" id="GO:0005344">
    <property type="term" value="F:oxygen carrier activity"/>
    <property type="evidence" value="ECO:0007669"/>
    <property type="project" value="UniProtKB-KW"/>
</dbReference>
<dbReference type="GO" id="GO:0004601">
    <property type="term" value="F:peroxidase activity"/>
    <property type="evidence" value="ECO:0007669"/>
    <property type="project" value="TreeGrafter"/>
</dbReference>
<dbReference type="GO" id="GO:0042744">
    <property type="term" value="P:hydrogen peroxide catabolic process"/>
    <property type="evidence" value="ECO:0007669"/>
    <property type="project" value="TreeGrafter"/>
</dbReference>
<dbReference type="CDD" id="cd08927">
    <property type="entry name" value="Hb-alpha-like"/>
    <property type="match status" value="1"/>
</dbReference>
<dbReference type="FunFam" id="1.10.490.10:FF:000002">
    <property type="entry name" value="Hemoglobin subunit alpha"/>
    <property type="match status" value="1"/>
</dbReference>
<dbReference type="Gene3D" id="1.10.490.10">
    <property type="entry name" value="Globins"/>
    <property type="match status" value="1"/>
</dbReference>
<dbReference type="InterPro" id="IPR000971">
    <property type="entry name" value="Globin"/>
</dbReference>
<dbReference type="InterPro" id="IPR009050">
    <property type="entry name" value="Globin-like_sf"/>
</dbReference>
<dbReference type="InterPro" id="IPR012292">
    <property type="entry name" value="Globin/Proto"/>
</dbReference>
<dbReference type="InterPro" id="IPR002338">
    <property type="entry name" value="Hemoglobin_a-typ"/>
</dbReference>
<dbReference type="InterPro" id="IPR050056">
    <property type="entry name" value="Hemoglobin_oxygen_transport"/>
</dbReference>
<dbReference type="InterPro" id="IPR002339">
    <property type="entry name" value="Hemoglobin_pi"/>
</dbReference>
<dbReference type="PANTHER" id="PTHR11442">
    <property type="entry name" value="HEMOGLOBIN FAMILY MEMBER"/>
    <property type="match status" value="1"/>
</dbReference>
<dbReference type="PANTHER" id="PTHR11442:SF48">
    <property type="entry name" value="HEMOGLOBIN SUBUNIT ALPHA"/>
    <property type="match status" value="1"/>
</dbReference>
<dbReference type="Pfam" id="PF00042">
    <property type="entry name" value="Globin"/>
    <property type="match status" value="1"/>
</dbReference>
<dbReference type="PRINTS" id="PR00612">
    <property type="entry name" value="ALPHAHAEM"/>
</dbReference>
<dbReference type="PRINTS" id="PR00815">
    <property type="entry name" value="PIHAEM"/>
</dbReference>
<dbReference type="SUPFAM" id="SSF46458">
    <property type="entry name" value="Globin-like"/>
    <property type="match status" value="1"/>
</dbReference>
<dbReference type="PROSITE" id="PS01033">
    <property type="entry name" value="GLOBIN"/>
    <property type="match status" value="1"/>
</dbReference>
<name>HBA_MICPE</name>